<proteinExistence type="inferred from homology"/>
<organism>
    <name type="scientific">Pseudomonas putida (strain ATCC 47054 / DSM 6125 / CFBP 8728 / NCIMB 11950 / KT2440)</name>
    <dbReference type="NCBI Taxonomy" id="160488"/>
    <lineage>
        <taxon>Bacteria</taxon>
        <taxon>Pseudomonadati</taxon>
        <taxon>Pseudomonadota</taxon>
        <taxon>Gammaproteobacteria</taxon>
        <taxon>Pseudomonadales</taxon>
        <taxon>Pseudomonadaceae</taxon>
        <taxon>Pseudomonas</taxon>
    </lineage>
</organism>
<comment type="function">
    <text evidence="1">Specifically methylates the pseudouridine at position 1915 (m3Psi1915) in 23S rRNA.</text>
</comment>
<comment type="catalytic activity">
    <reaction evidence="1">
        <text>pseudouridine(1915) in 23S rRNA + S-adenosyl-L-methionine = N(3)-methylpseudouridine(1915) in 23S rRNA + S-adenosyl-L-homocysteine + H(+)</text>
        <dbReference type="Rhea" id="RHEA:42752"/>
        <dbReference type="Rhea" id="RHEA-COMP:10221"/>
        <dbReference type="Rhea" id="RHEA-COMP:10222"/>
        <dbReference type="ChEBI" id="CHEBI:15378"/>
        <dbReference type="ChEBI" id="CHEBI:57856"/>
        <dbReference type="ChEBI" id="CHEBI:59789"/>
        <dbReference type="ChEBI" id="CHEBI:65314"/>
        <dbReference type="ChEBI" id="CHEBI:74486"/>
        <dbReference type="EC" id="2.1.1.177"/>
    </reaction>
</comment>
<comment type="subunit">
    <text evidence="1">Homodimer.</text>
</comment>
<comment type="subcellular location">
    <subcellularLocation>
        <location evidence="1">Cytoplasm</location>
    </subcellularLocation>
</comment>
<comment type="similarity">
    <text evidence="1">Belongs to the RNA methyltransferase RlmH family.</text>
</comment>
<comment type="sequence caution" evidence="2">
    <conflict type="erroneous initiation">
        <sequence resource="EMBL-CDS" id="AAN70377"/>
    </conflict>
</comment>
<reference key="1">
    <citation type="journal article" date="2002" name="Environ. Microbiol.">
        <title>Complete genome sequence and comparative analysis of the metabolically versatile Pseudomonas putida KT2440.</title>
        <authorList>
            <person name="Nelson K.E."/>
            <person name="Weinel C."/>
            <person name="Paulsen I.T."/>
            <person name="Dodson R.J."/>
            <person name="Hilbert H."/>
            <person name="Martins dos Santos V.A.P."/>
            <person name="Fouts D.E."/>
            <person name="Gill S.R."/>
            <person name="Pop M."/>
            <person name="Holmes M."/>
            <person name="Brinkac L.M."/>
            <person name="Beanan M.J."/>
            <person name="DeBoy R.T."/>
            <person name="Daugherty S.C."/>
            <person name="Kolonay J.F."/>
            <person name="Madupu R."/>
            <person name="Nelson W.C."/>
            <person name="White O."/>
            <person name="Peterson J.D."/>
            <person name="Khouri H.M."/>
            <person name="Hance I."/>
            <person name="Chris Lee P."/>
            <person name="Holtzapple E.K."/>
            <person name="Scanlan D."/>
            <person name="Tran K."/>
            <person name="Moazzez A."/>
            <person name="Utterback T.R."/>
            <person name="Rizzo M."/>
            <person name="Lee K."/>
            <person name="Kosack D."/>
            <person name="Moestl D."/>
            <person name="Wedler H."/>
            <person name="Lauber J."/>
            <person name="Stjepandic D."/>
            <person name="Hoheisel J."/>
            <person name="Straetz M."/>
            <person name="Heim S."/>
            <person name="Kiewitz C."/>
            <person name="Eisen J.A."/>
            <person name="Timmis K.N."/>
            <person name="Duesterhoeft A."/>
            <person name="Tuemmler B."/>
            <person name="Fraser C.M."/>
        </authorList>
    </citation>
    <scope>NUCLEOTIDE SEQUENCE [LARGE SCALE GENOMIC DNA]</scope>
    <source>
        <strain>ATCC 47054 / DSM 6125 / CFBP 8728 / NCIMB 11950 / KT2440</strain>
    </source>
</reference>
<feature type="chain" id="PRO_0000198164" description="Ribosomal RNA large subunit methyltransferase H">
    <location>
        <begin position="1"/>
        <end position="155"/>
    </location>
</feature>
<feature type="binding site" evidence="1">
    <location>
        <position position="73"/>
    </location>
    <ligand>
        <name>S-adenosyl-L-methionine</name>
        <dbReference type="ChEBI" id="CHEBI:59789"/>
    </ligand>
</feature>
<feature type="binding site" evidence="1">
    <location>
        <position position="104"/>
    </location>
    <ligand>
        <name>S-adenosyl-L-methionine</name>
        <dbReference type="ChEBI" id="CHEBI:59789"/>
    </ligand>
</feature>
<feature type="binding site" evidence="1">
    <location>
        <begin position="123"/>
        <end position="128"/>
    </location>
    <ligand>
        <name>S-adenosyl-L-methionine</name>
        <dbReference type="ChEBI" id="CHEBI:59789"/>
    </ligand>
</feature>
<keyword id="KW-0963">Cytoplasm</keyword>
<keyword id="KW-0489">Methyltransferase</keyword>
<keyword id="KW-1185">Reference proteome</keyword>
<keyword id="KW-0698">rRNA processing</keyword>
<keyword id="KW-0949">S-adenosyl-L-methionine</keyword>
<keyword id="KW-0808">Transferase</keyword>
<sequence length="155" mass="17669">MRLRLIAVGSRMPKWVEEGWHEYAKRLPAELSLELVEIPLNTRGKNADVARLIRQEGEAMLSKVQPGERIVTLEVHGKPWSTEQLATELDRWRLDARTVNLMVGGPEGLAPEVCARAEQRWSLSPLTLPHPLVRILIGEQIYRAWTVLSGHPYHK</sequence>
<gene>
    <name evidence="1" type="primary">rlmH</name>
    <name type="ordered locus">PP_4808</name>
</gene>
<name>RLMH_PSEPK</name>
<accession>Q88DL7</accession>
<dbReference type="EC" id="2.1.1.177" evidence="1"/>
<dbReference type="EMBL" id="AE015451">
    <property type="protein sequence ID" value="AAN70377.1"/>
    <property type="status" value="ALT_INIT"/>
    <property type="molecule type" value="Genomic_DNA"/>
</dbReference>
<dbReference type="RefSeq" id="NP_746913.3">
    <property type="nucleotide sequence ID" value="NC_002947.4"/>
</dbReference>
<dbReference type="RefSeq" id="WP_003249722.1">
    <property type="nucleotide sequence ID" value="NZ_CP169744.1"/>
</dbReference>
<dbReference type="SMR" id="Q88DL7"/>
<dbReference type="STRING" id="160488.PP_4808"/>
<dbReference type="PaxDb" id="160488-PP_4808"/>
<dbReference type="GeneID" id="97170168"/>
<dbReference type="KEGG" id="ppu:PP_4808"/>
<dbReference type="PATRIC" id="fig|160488.4.peg.5131"/>
<dbReference type="eggNOG" id="COG1576">
    <property type="taxonomic scope" value="Bacteria"/>
</dbReference>
<dbReference type="HOGENOM" id="CLU_100552_1_0_6"/>
<dbReference type="OrthoDB" id="9806643at2"/>
<dbReference type="PhylomeDB" id="Q88DL7"/>
<dbReference type="Proteomes" id="UP000000556">
    <property type="component" value="Chromosome"/>
</dbReference>
<dbReference type="GO" id="GO:0005737">
    <property type="term" value="C:cytoplasm"/>
    <property type="evidence" value="ECO:0007669"/>
    <property type="project" value="UniProtKB-SubCell"/>
</dbReference>
<dbReference type="GO" id="GO:0070038">
    <property type="term" value="F:rRNA (pseudouridine-N3-)-methyltransferase activity"/>
    <property type="evidence" value="ECO:0007669"/>
    <property type="project" value="UniProtKB-UniRule"/>
</dbReference>
<dbReference type="CDD" id="cd18081">
    <property type="entry name" value="RlmH-like"/>
    <property type="match status" value="1"/>
</dbReference>
<dbReference type="Gene3D" id="3.40.1280.10">
    <property type="match status" value="1"/>
</dbReference>
<dbReference type="HAMAP" id="MF_00658">
    <property type="entry name" value="23SrRNA_methyltr_H"/>
    <property type="match status" value="1"/>
</dbReference>
<dbReference type="InterPro" id="IPR029028">
    <property type="entry name" value="Alpha/beta_knot_MTases"/>
</dbReference>
<dbReference type="InterPro" id="IPR003742">
    <property type="entry name" value="RlmH-like"/>
</dbReference>
<dbReference type="InterPro" id="IPR029026">
    <property type="entry name" value="tRNA_m1G_MTases_N"/>
</dbReference>
<dbReference type="NCBIfam" id="NF000986">
    <property type="entry name" value="PRK00103.1-4"/>
    <property type="match status" value="1"/>
</dbReference>
<dbReference type="NCBIfam" id="TIGR00246">
    <property type="entry name" value="tRNA_RlmH_YbeA"/>
    <property type="match status" value="1"/>
</dbReference>
<dbReference type="PANTHER" id="PTHR33603">
    <property type="entry name" value="METHYLTRANSFERASE"/>
    <property type="match status" value="1"/>
</dbReference>
<dbReference type="PANTHER" id="PTHR33603:SF1">
    <property type="entry name" value="RIBOSOMAL RNA LARGE SUBUNIT METHYLTRANSFERASE H"/>
    <property type="match status" value="1"/>
</dbReference>
<dbReference type="Pfam" id="PF02590">
    <property type="entry name" value="SPOUT_MTase"/>
    <property type="match status" value="1"/>
</dbReference>
<dbReference type="PIRSF" id="PIRSF004505">
    <property type="entry name" value="MT_bac"/>
    <property type="match status" value="1"/>
</dbReference>
<dbReference type="SUPFAM" id="SSF75217">
    <property type="entry name" value="alpha/beta knot"/>
    <property type="match status" value="1"/>
</dbReference>
<protein>
    <recommendedName>
        <fullName evidence="1">Ribosomal RNA large subunit methyltransferase H</fullName>
        <ecNumber evidence="1">2.1.1.177</ecNumber>
    </recommendedName>
    <alternativeName>
        <fullName evidence="1">23S rRNA (pseudouridine1915-N3)-methyltransferase</fullName>
    </alternativeName>
    <alternativeName>
        <fullName evidence="1">23S rRNA m3Psi1915 methyltransferase</fullName>
    </alternativeName>
    <alternativeName>
        <fullName evidence="1">rRNA (pseudouridine-N3-)-methyltransferase RlmH</fullName>
    </alternativeName>
</protein>
<evidence type="ECO:0000255" key="1">
    <source>
        <dbReference type="HAMAP-Rule" id="MF_00658"/>
    </source>
</evidence>
<evidence type="ECO:0000305" key="2"/>